<dbReference type="EC" id="1.17.7.4" evidence="1"/>
<dbReference type="EMBL" id="CP000388">
    <property type="protein sequence ID" value="ABG41681.1"/>
    <property type="molecule type" value="Genomic_DNA"/>
</dbReference>
<dbReference type="RefSeq" id="WP_011575914.1">
    <property type="nucleotide sequence ID" value="NC_008228.1"/>
</dbReference>
<dbReference type="SMR" id="Q15R07"/>
<dbReference type="STRING" id="342610.Patl_3175"/>
<dbReference type="KEGG" id="pat:Patl_3175"/>
<dbReference type="eggNOG" id="COG0761">
    <property type="taxonomic scope" value="Bacteria"/>
</dbReference>
<dbReference type="HOGENOM" id="CLU_027486_1_0_6"/>
<dbReference type="OrthoDB" id="9804068at2"/>
<dbReference type="UniPathway" id="UPA00056">
    <property type="reaction ID" value="UER00097"/>
</dbReference>
<dbReference type="UniPathway" id="UPA00059">
    <property type="reaction ID" value="UER00105"/>
</dbReference>
<dbReference type="Proteomes" id="UP000001981">
    <property type="component" value="Chromosome"/>
</dbReference>
<dbReference type="GO" id="GO:0051539">
    <property type="term" value="F:4 iron, 4 sulfur cluster binding"/>
    <property type="evidence" value="ECO:0007669"/>
    <property type="project" value="UniProtKB-UniRule"/>
</dbReference>
<dbReference type="GO" id="GO:0051745">
    <property type="term" value="F:4-hydroxy-3-methylbut-2-enyl diphosphate reductase activity"/>
    <property type="evidence" value="ECO:0007669"/>
    <property type="project" value="UniProtKB-UniRule"/>
</dbReference>
<dbReference type="GO" id="GO:0046872">
    <property type="term" value="F:metal ion binding"/>
    <property type="evidence" value="ECO:0007669"/>
    <property type="project" value="UniProtKB-KW"/>
</dbReference>
<dbReference type="GO" id="GO:0050992">
    <property type="term" value="P:dimethylallyl diphosphate biosynthetic process"/>
    <property type="evidence" value="ECO:0007669"/>
    <property type="project" value="UniProtKB-UniRule"/>
</dbReference>
<dbReference type="GO" id="GO:0019288">
    <property type="term" value="P:isopentenyl diphosphate biosynthetic process, methylerythritol 4-phosphate pathway"/>
    <property type="evidence" value="ECO:0007669"/>
    <property type="project" value="UniProtKB-UniRule"/>
</dbReference>
<dbReference type="GO" id="GO:0016114">
    <property type="term" value="P:terpenoid biosynthetic process"/>
    <property type="evidence" value="ECO:0007669"/>
    <property type="project" value="UniProtKB-UniRule"/>
</dbReference>
<dbReference type="CDD" id="cd13944">
    <property type="entry name" value="lytB_ispH"/>
    <property type="match status" value="1"/>
</dbReference>
<dbReference type="Gene3D" id="3.40.50.11270">
    <property type="match status" value="1"/>
</dbReference>
<dbReference type="Gene3D" id="3.40.1010.20">
    <property type="entry name" value="4-hydroxy-3-methylbut-2-enyl diphosphate reductase, catalytic domain"/>
    <property type="match status" value="2"/>
</dbReference>
<dbReference type="HAMAP" id="MF_00191">
    <property type="entry name" value="IspH"/>
    <property type="match status" value="1"/>
</dbReference>
<dbReference type="InterPro" id="IPR003451">
    <property type="entry name" value="LytB/IspH"/>
</dbReference>
<dbReference type="NCBIfam" id="TIGR00216">
    <property type="entry name" value="ispH_lytB"/>
    <property type="match status" value="1"/>
</dbReference>
<dbReference type="NCBIfam" id="NF002188">
    <property type="entry name" value="PRK01045.1-2"/>
    <property type="match status" value="1"/>
</dbReference>
<dbReference type="NCBIfam" id="NF002190">
    <property type="entry name" value="PRK01045.1-4"/>
    <property type="match status" value="1"/>
</dbReference>
<dbReference type="PANTHER" id="PTHR30426">
    <property type="entry name" value="4-HYDROXY-3-METHYLBUT-2-ENYL DIPHOSPHATE REDUCTASE"/>
    <property type="match status" value="1"/>
</dbReference>
<dbReference type="PANTHER" id="PTHR30426:SF0">
    <property type="entry name" value="4-HYDROXY-3-METHYLBUT-2-ENYL DIPHOSPHATE REDUCTASE"/>
    <property type="match status" value="1"/>
</dbReference>
<dbReference type="Pfam" id="PF02401">
    <property type="entry name" value="LYTB"/>
    <property type="match status" value="1"/>
</dbReference>
<comment type="function">
    <text evidence="1">Catalyzes the conversion of 1-hydroxy-2-methyl-2-(E)-butenyl 4-diphosphate (HMBPP) into a mixture of isopentenyl diphosphate (IPP) and dimethylallyl diphosphate (DMAPP). Acts in the terminal step of the DOXP/MEP pathway for isoprenoid precursor biosynthesis.</text>
</comment>
<comment type="catalytic activity">
    <reaction evidence="1">
        <text>isopentenyl diphosphate + 2 oxidized [2Fe-2S]-[ferredoxin] + H2O = (2E)-4-hydroxy-3-methylbut-2-enyl diphosphate + 2 reduced [2Fe-2S]-[ferredoxin] + 2 H(+)</text>
        <dbReference type="Rhea" id="RHEA:24488"/>
        <dbReference type="Rhea" id="RHEA-COMP:10000"/>
        <dbReference type="Rhea" id="RHEA-COMP:10001"/>
        <dbReference type="ChEBI" id="CHEBI:15377"/>
        <dbReference type="ChEBI" id="CHEBI:15378"/>
        <dbReference type="ChEBI" id="CHEBI:33737"/>
        <dbReference type="ChEBI" id="CHEBI:33738"/>
        <dbReference type="ChEBI" id="CHEBI:128753"/>
        <dbReference type="ChEBI" id="CHEBI:128769"/>
        <dbReference type="EC" id="1.17.7.4"/>
    </reaction>
</comment>
<comment type="catalytic activity">
    <reaction evidence="1">
        <text>dimethylallyl diphosphate + 2 oxidized [2Fe-2S]-[ferredoxin] + H2O = (2E)-4-hydroxy-3-methylbut-2-enyl diphosphate + 2 reduced [2Fe-2S]-[ferredoxin] + 2 H(+)</text>
        <dbReference type="Rhea" id="RHEA:24825"/>
        <dbReference type="Rhea" id="RHEA-COMP:10000"/>
        <dbReference type="Rhea" id="RHEA-COMP:10001"/>
        <dbReference type="ChEBI" id="CHEBI:15377"/>
        <dbReference type="ChEBI" id="CHEBI:15378"/>
        <dbReference type="ChEBI" id="CHEBI:33737"/>
        <dbReference type="ChEBI" id="CHEBI:33738"/>
        <dbReference type="ChEBI" id="CHEBI:57623"/>
        <dbReference type="ChEBI" id="CHEBI:128753"/>
        <dbReference type="EC" id="1.17.7.4"/>
    </reaction>
</comment>
<comment type="cofactor">
    <cofactor evidence="1">
        <name>[4Fe-4S] cluster</name>
        <dbReference type="ChEBI" id="CHEBI:49883"/>
    </cofactor>
    <text evidence="1">Binds 1 [4Fe-4S] cluster per subunit.</text>
</comment>
<comment type="pathway">
    <text evidence="1">Isoprenoid biosynthesis; dimethylallyl diphosphate biosynthesis; dimethylallyl diphosphate from (2E)-4-hydroxy-3-methylbutenyl diphosphate: step 1/1.</text>
</comment>
<comment type="pathway">
    <text evidence="1">Isoprenoid biosynthesis; isopentenyl diphosphate biosynthesis via DXP pathway; isopentenyl diphosphate from 1-deoxy-D-xylulose 5-phosphate: step 6/6.</text>
</comment>
<comment type="similarity">
    <text evidence="1">Belongs to the IspH family.</text>
</comment>
<protein>
    <recommendedName>
        <fullName evidence="1">4-hydroxy-3-methylbut-2-enyl diphosphate reductase</fullName>
        <shortName evidence="1">HMBPP reductase</shortName>
        <ecNumber evidence="1">1.17.7.4</ecNumber>
    </recommendedName>
</protein>
<name>ISPH_PSEA6</name>
<gene>
    <name evidence="1" type="primary">ispH</name>
    <name type="ordered locus">Patl_3175</name>
</gene>
<proteinExistence type="inferred from homology"/>
<accession>Q15R07</accession>
<organism>
    <name type="scientific">Pseudoalteromonas atlantica (strain T6c / ATCC BAA-1087)</name>
    <dbReference type="NCBI Taxonomy" id="3042615"/>
    <lineage>
        <taxon>Bacteria</taxon>
        <taxon>Pseudomonadati</taxon>
        <taxon>Pseudomonadota</taxon>
        <taxon>Gammaproteobacteria</taxon>
        <taxon>Alteromonadales</taxon>
        <taxon>Alteromonadaceae</taxon>
        <taxon>Paraglaciecola</taxon>
    </lineage>
</organism>
<reference key="1">
    <citation type="submission" date="2006-06" db="EMBL/GenBank/DDBJ databases">
        <title>Complete sequence of Pseudoalteromonas atlantica T6c.</title>
        <authorList>
            <consortium name="US DOE Joint Genome Institute"/>
            <person name="Copeland A."/>
            <person name="Lucas S."/>
            <person name="Lapidus A."/>
            <person name="Barry K."/>
            <person name="Detter J.C."/>
            <person name="Glavina del Rio T."/>
            <person name="Hammon N."/>
            <person name="Israni S."/>
            <person name="Dalin E."/>
            <person name="Tice H."/>
            <person name="Pitluck S."/>
            <person name="Saunders E."/>
            <person name="Brettin T."/>
            <person name="Bruce D."/>
            <person name="Han C."/>
            <person name="Tapia R."/>
            <person name="Gilna P."/>
            <person name="Schmutz J."/>
            <person name="Larimer F."/>
            <person name="Land M."/>
            <person name="Hauser L."/>
            <person name="Kyrpides N."/>
            <person name="Kim E."/>
            <person name="Karls A.C."/>
            <person name="Bartlett D."/>
            <person name="Higgins B.P."/>
            <person name="Richardson P."/>
        </authorList>
    </citation>
    <scope>NUCLEOTIDE SEQUENCE [LARGE SCALE GENOMIC DNA]</scope>
    <source>
        <strain>T6c / ATCC BAA-1087</strain>
    </source>
</reference>
<keyword id="KW-0004">4Fe-4S</keyword>
<keyword id="KW-0408">Iron</keyword>
<keyword id="KW-0411">Iron-sulfur</keyword>
<keyword id="KW-0414">Isoprene biosynthesis</keyword>
<keyword id="KW-0479">Metal-binding</keyword>
<keyword id="KW-0560">Oxidoreductase</keyword>
<evidence type="ECO:0000255" key="1">
    <source>
        <dbReference type="HAMAP-Rule" id="MF_00191"/>
    </source>
</evidence>
<sequence>MQIHLANPRGFCAGVDRAITIVERALEIFSPPIYVRHEVVHNKFVVDGLKERGAVFVDELVEVPDDSIVIFSAHGVSQAVRNEASSRGLKVFDATCPLVTKVHMEVMRASSKGTECVLIGHQGHPEVEGTMGQYDNQDGGIYLVESVDDVARLEVKNPSALYYCSQTTLSVDDTADVIDALRAKFPAIEGPRKDDICYATQNRQDSVRELSADCDILLVVGAQNSSNSNRLRELAEKIGAKAHLIADANCIQKEWLANAKHIGVTAGASAPEVLVQGVVDRLKEWGASSATERPGRLENIEFAVPKELRVKQVS</sequence>
<feature type="chain" id="PRO_1000021158" description="4-hydroxy-3-methylbut-2-enyl diphosphate reductase">
    <location>
        <begin position="1"/>
        <end position="314"/>
    </location>
</feature>
<feature type="active site" description="Proton donor" evidence="1">
    <location>
        <position position="126"/>
    </location>
</feature>
<feature type="binding site" evidence="1">
    <location>
        <position position="12"/>
    </location>
    <ligand>
        <name>[4Fe-4S] cluster</name>
        <dbReference type="ChEBI" id="CHEBI:49883"/>
    </ligand>
</feature>
<feature type="binding site" evidence="1">
    <location>
        <position position="41"/>
    </location>
    <ligand>
        <name>(2E)-4-hydroxy-3-methylbut-2-enyl diphosphate</name>
        <dbReference type="ChEBI" id="CHEBI:128753"/>
    </ligand>
</feature>
<feature type="binding site" evidence="1">
    <location>
        <position position="41"/>
    </location>
    <ligand>
        <name>dimethylallyl diphosphate</name>
        <dbReference type="ChEBI" id="CHEBI:57623"/>
    </ligand>
</feature>
<feature type="binding site" evidence="1">
    <location>
        <position position="41"/>
    </location>
    <ligand>
        <name>isopentenyl diphosphate</name>
        <dbReference type="ChEBI" id="CHEBI:128769"/>
    </ligand>
</feature>
<feature type="binding site" evidence="1">
    <location>
        <position position="74"/>
    </location>
    <ligand>
        <name>(2E)-4-hydroxy-3-methylbut-2-enyl diphosphate</name>
        <dbReference type="ChEBI" id="CHEBI:128753"/>
    </ligand>
</feature>
<feature type="binding site" evidence="1">
    <location>
        <position position="74"/>
    </location>
    <ligand>
        <name>dimethylallyl diphosphate</name>
        <dbReference type="ChEBI" id="CHEBI:57623"/>
    </ligand>
</feature>
<feature type="binding site" evidence="1">
    <location>
        <position position="74"/>
    </location>
    <ligand>
        <name>isopentenyl diphosphate</name>
        <dbReference type="ChEBI" id="CHEBI:128769"/>
    </ligand>
</feature>
<feature type="binding site" evidence="1">
    <location>
        <position position="96"/>
    </location>
    <ligand>
        <name>[4Fe-4S] cluster</name>
        <dbReference type="ChEBI" id="CHEBI:49883"/>
    </ligand>
</feature>
<feature type="binding site" evidence="1">
    <location>
        <position position="124"/>
    </location>
    <ligand>
        <name>(2E)-4-hydroxy-3-methylbut-2-enyl diphosphate</name>
        <dbReference type="ChEBI" id="CHEBI:128753"/>
    </ligand>
</feature>
<feature type="binding site" evidence="1">
    <location>
        <position position="124"/>
    </location>
    <ligand>
        <name>dimethylallyl diphosphate</name>
        <dbReference type="ChEBI" id="CHEBI:57623"/>
    </ligand>
</feature>
<feature type="binding site" evidence="1">
    <location>
        <position position="124"/>
    </location>
    <ligand>
        <name>isopentenyl diphosphate</name>
        <dbReference type="ChEBI" id="CHEBI:128769"/>
    </ligand>
</feature>
<feature type="binding site" evidence="1">
    <location>
        <position position="167"/>
    </location>
    <ligand>
        <name>(2E)-4-hydroxy-3-methylbut-2-enyl diphosphate</name>
        <dbReference type="ChEBI" id="CHEBI:128753"/>
    </ligand>
</feature>
<feature type="binding site" evidence="1">
    <location>
        <position position="197"/>
    </location>
    <ligand>
        <name>[4Fe-4S] cluster</name>
        <dbReference type="ChEBI" id="CHEBI:49883"/>
    </ligand>
</feature>
<feature type="binding site" evidence="1">
    <location>
        <position position="225"/>
    </location>
    <ligand>
        <name>(2E)-4-hydroxy-3-methylbut-2-enyl diphosphate</name>
        <dbReference type="ChEBI" id="CHEBI:128753"/>
    </ligand>
</feature>
<feature type="binding site" evidence="1">
    <location>
        <position position="225"/>
    </location>
    <ligand>
        <name>dimethylallyl diphosphate</name>
        <dbReference type="ChEBI" id="CHEBI:57623"/>
    </ligand>
</feature>
<feature type="binding site" evidence="1">
    <location>
        <position position="225"/>
    </location>
    <ligand>
        <name>isopentenyl diphosphate</name>
        <dbReference type="ChEBI" id="CHEBI:128769"/>
    </ligand>
</feature>
<feature type="binding site" evidence="1">
    <location>
        <position position="226"/>
    </location>
    <ligand>
        <name>(2E)-4-hydroxy-3-methylbut-2-enyl diphosphate</name>
        <dbReference type="ChEBI" id="CHEBI:128753"/>
    </ligand>
</feature>
<feature type="binding site" evidence="1">
    <location>
        <position position="226"/>
    </location>
    <ligand>
        <name>dimethylallyl diphosphate</name>
        <dbReference type="ChEBI" id="CHEBI:57623"/>
    </ligand>
</feature>
<feature type="binding site" evidence="1">
    <location>
        <position position="226"/>
    </location>
    <ligand>
        <name>isopentenyl diphosphate</name>
        <dbReference type="ChEBI" id="CHEBI:128769"/>
    </ligand>
</feature>
<feature type="binding site" evidence="1">
    <location>
        <position position="227"/>
    </location>
    <ligand>
        <name>(2E)-4-hydroxy-3-methylbut-2-enyl diphosphate</name>
        <dbReference type="ChEBI" id="CHEBI:128753"/>
    </ligand>
</feature>
<feature type="binding site" evidence="1">
    <location>
        <position position="227"/>
    </location>
    <ligand>
        <name>dimethylallyl diphosphate</name>
        <dbReference type="ChEBI" id="CHEBI:57623"/>
    </ligand>
</feature>
<feature type="binding site" evidence="1">
    <location>
        <position position="227"/>
    </location>
    <ligand>
        <name>isopentenyl diphosphate</name>
        <dbReference type="ChEBI" id="CHEBI:128769"/>
    </ligand>
</feature>
<feature type="binding site" evidence="1">
    <location>
        <position position="269"/>
    </location>
    <ligand>
        <name>(2E)-4-hydroxy-3-methylbut-2-enyl diphosphate</name>
        <dbReference type="ChEBI" id="CHEBI:128753"/>
    </ligand>
</feature>
<feature type="binding site" evidence="1">
    <location>
        <position position="269"/>
    </location>
    <ligand>
        <name>dimethylallyl diphosphate</name>
        <dbReference type="ChEBI" id="CHEBI:57623"/>
    </ligand>
</feature>
<feature type="binding site" evidence="1">
    <location>
        <position position="269"/>
    </location>
    <ligand>
        <name>isopentenyl diphosphate</name>
        <dbReference type="ChEBI" id="CHEBI:128769"/>
    </ligand>
</feature>